<accession>Q92JJ9</accession>
<comment type="function">
    <text evidence="1">Acts as a processive, ATP-dependent zinc metallopeptidase for both cytoplasmic and membrane proteins. Plays a role in the quality control of integral membrane proteins.</text>
</comment>
<comment type="cofactor">
    <cofactor evidence="1">
        <name>Zn(2+)</name>
        <dbReference type="ChEBI" id="CHEBI:29105"/>
    </cofactor>
    <text evidence="1">Binds 1 zinc ion per subunit.</text>
</comment>
<comment type="subunit">
    <text evidence="1">Homohexamer.</text>
</comment>
<comment type="subcellular location">
    <subcellularLocation>
        <location evidence="1">Cell inner membrane</location>
        <topology evidence="1">Multi-pass membrane protein</topology>
        <orientation evidence="1">Cytoplasmic side</orientation>
    </subcellularLocation>
</comment>
<comment type="similarity">
    <text evidence="1">In the central section; belongs to the AAA ATPase family.</text>
</comment>
<comment type="similarity">
    <text evidence="1">In the C-terminal section; belongs to the peptidase M41 family.</text>
</comment>
<gene>
    <name evidence="1" type="primary">ftsH</name>
    <name type="ordered locus">RC0068</name>
</gene>
<protein>
    <recommendedName>
        <fullName evidence="1">ATP-dependent zinc metalloprotease FtsH</fullName>
        <ecNumber evidence="1">3.4.24.-</ecNumber>
    </recommendedName>
</protein>
<keyword id="KW-0067">ATP-binding</keyword>
<keyword id="KW-0997">Cell inner membrane</keyword>
<keyword id="KW-1003">Cell membrane</keyword>
<keyword id="KW-0378">Hydrolase</keyword>
<keyword id="KW-0472">Membrane</keyword>
<keyword id="KW-0479">Metal-binding</keyword>
<keyword id="KW-0482">Metalloprotease</keyword>
<keyword id="KW-0547">Nucleotide-binding</keyword>
<keyword id="KW-0645">Protease</keyword>
<keyword id="KW-0812">Transmembrane</keyword>
<keyword id="KW-1133">Transmembrane helix</keyword>
<keyword id="KW-0862">Zinc</keyword>
<proteinExistence type="inferred from homology"/>
<evidence type="ECO:0000255" key="1">
    <source>
        <dbReference type="HAMAP-Rule" id="MF_01458"/>
    </source>
</evidence>
<evidence type="ECO:0000256" key="2">
    <source>
        <dbReference type="SAM" id="MobiDB-lite"/>
    </source>
</evidence>
<sequence length="637" mass="69915">MNNQGRSILAWATLFIFVILLFNVFQSDSLLGGRNNITFSDFLTRVDEKTVNSVKIQGRVIEGTSNDGSTFNTYAPDYPDLVNRLTSNDVNIEVVPLETRMNTFLGFLISWFPMLLLIGVWVFFMRQMHGGGKAMGFGKSKARLLSDKGPKITFKDVAGIDEAKEELTEIVDFLRDPSKFQKLGGKIPKGCLLIGPPGTGKTLLAKAIAGEANVPFFSISGSDFVEMFVGVGASRVRDMFEQGKRNAPCIIFIDEIDAVGRHRGIGMGGGNDEREQTLNQMLVEMDGFEANEGVVIIAATNRPDVLDRALLRPGRFDRQIAVANPDINGREQILKVHLKKIKYNSTVLARIIARGTPGFSGAELANLVNEAALIAARLGKKEVDMHDMEEAKDKVLMGVARRSIAMSEKEKRLTAYHEGGHALVGLYCPAASPIHKATIIPRGNALGMVQRLPETDEYSQNREQMESSIAVYMAGRVAEEIIFGRNKVTSGASSDIKGATNIARAMVTKAGLSDLIGPIFHGSSGDDMYGRQPNNETSEATAELIDAEVKRIITQGYEFAKDILTKHIDQLHTLANALIEYETLSGQQIKNLLSGRALDSEEENKFPFNDSSTIKIDKEKSPEKTKTTKAKKENYAS</sequence>
<name>FTSH_RICCN</name>
<reference key="1">
    <citation type="journal article" date="2001" name="Science">
        <title>Mechanisms of evolution in Rickettsia conorii and R. prowazekii.</title>
        <authorList>
            <person name="Ogata H."/>
            <person name="Audic S."/>
            <person name="Renesto-Audiffren P."/>
            <person name="Fournier P.-E."/>
            <person name="Barbe V."/>
            <person name="Samson D."/>
            <person name="Roux V."/>
            <person name="Cossart P."/>
            <person name="Weissenbach J."/>
            <person name="Claverie J.-M."/>
            <person name="Raoult D."/>
        </authorList>
    </citation>
    <scope>NUCLEOTIDE SEQUENCE [LARGE SCALE GENOMIC DNA]</scope>
    <source>
        <strain>ATCC VR-613 / Malish 7</strain>
    </source>
</reference>
<feature type="chain" id="PRO_0000084645" description="ATP-dependent zinc metalloprotease FtsH">
    <location>
        <begin position="1"/>
        <end position="637"/>
    </location>
</feature>
<feature type="topological domain" description="Cytoplasmic" evidence="1">
    <location>
        <begin position="1"/>
        <end position="6"/>
    </location>
</feature>
<feature type="transmembrane region" description="Helical" evidence="1">
    <location>
        <begin position="7"/>
        <end position="27"/>
    </location>
</feature>
<feature type="topological domain" description="Periplasmic" evidence="1">
    <location>
        <begin position="28"/>
        <end position="103"/>
    </location>
</feature>
<feature type="transmembrane region" description="Helical" evidence="1">
    <location>
        <begin position="104"/>
        <end position="124"/>
    </location>
</feature>
<feature type="topological domain" description="Cytoplasmic" evidence="1">
    <location>
        <begin position="125"/>
        <end position="637"/>
    </location>
</feature>
<feature type="region of interest" description="Disordered" evidence="2">
    <location>
        <begin position="603"/>
        <end position="637"/>
    </location>
</feature>
<feature type="compositionally biased region" description="Basic and acidic residues" evidence="2">
    <location>
        <begin position="615"/>
        <end position="637"/>
    </location>
</feature>
<feature type="active site" evidence="1">
    <location>
        <position position="418"/>
    </location>
</feature>
<feature type="binding site" evidence="1">
    <location>
        <begin position="195"/>
        <end position="202"/>
    </location>
    <ligand>
        <name>ATP</name>
        <dbReference type="ChEBI" id="CHEBI:30616"/>
    </ligand>
</feature>
<feature type="binding site" evidence="1">
    <location>
        <position position="417"/>
    </location>
    <ligand>
        <name>Zn(2+)</name>
        <dbReference type="ChEBI" id="CHEBI:29105"/>
        <note>catalytic</note>
    </ligand>
</feature>
<feature type="binding site" evidence="1">
    <location>
        <position position="421"/>
    </location>
    <ligand>
        <name>Zn(2+)</name>
        <dbReference type="ChEBI" id="CHEBI:29105"/>
        <note>catalytic</note>
    </ligand>
</feature>
<feature type="binding site" evidence="1">
    <location>
        <position position="495"/>
    </location>
    <ligand>
        <name>Zn(2+)</name>
        <dbReference type="ChEBI" id="CHEBI:29105"/>
        <note>catalytic</note>
    </ligand>
</feature>
<dbReference type="EC" id="3.4.24.-" evidence="1"/>
<dbReference type="EMBL" id="AE006914">
    <property type="protein sequence ID" value="AAL02606.1"/>
    <property type="molecule type" value="Genomic_DNA"/>
</dbReference>
<dbReference type="PIR" id="D97708">
    <property type="entry name" value="D97708"/>
</dbReference>
<dbReference type="RefSeq" id="WP_010976753.1">
    <property type="nucleotide sequence ID" value="NC_003103.1"/>
</dbReference>
<dbReference type="SMR" id="Q92JJ9"/>
<dbReference type="GeneID" id="928595"/>
<dbReference type="KEGG" id="rco:RC0068"/>
<dbReference type="PATRIC" id="fig|272944.4.peg.79"/>
<dbReference type="HOGENOM" id="CLU_000688_16_2_5"/>
<dbReference type="Proteomes" id="UP000000816">
    <property type="component" value="Chromosome"/>
</dbReference>
<dbReference type="GO" id="GO:0005886">
    <property type="term" value="C:plasma membrane"/>
    <property type="evidence" value="ECO:0007669"/>
    <property type="project" value="UniProtKB-SubCell"/>
</dbReference>
<dbReference type="GO" id="GO:0005524">
    <property type="term" value="F:ATP binding"/>
    <property type="evidence" value="ECO:0007669"/>
    <property type="project" value="UniProtKB-UniRule"/>
</dbReference>
<dbReference type="GO" id="GO:0016887">
    <property type="term" value="F:ATP hydrolysis activity"/>
    <property type="evidence" value="ECO:0007669"/>
    <property type="project" value="UniProtKB-UniRule"/>
</dbReference>
<dbReference type="GO" id="GO:0004176">
    <property type="term" value="F:ATP-dependent peptidase activity"/>
    <property type="evidence" value="ECO:0007669"/>
    <property type="project" value="InterPro"/>
</dbReference>
<dbReference type="GO" id="GO:0004222">
    <property type="term" value="F:metalloendopeptidase activity"/>
    <property type="evidence" value="ECO:0007669"/>
    <property type="project" value="InterPro"/>
</dbReference>
<dbReference type="GO" id="GO:0008270">
    <property type="term" value="F:zinc ion binding"/>
    <property type="evidence" value="ECO:0007669"/>
    <property type="project" value="UniProtKB-UniRule"/>
</dbReference>
<dbReference type="GO" id="GO:0030163">
    <property type="term" value="P:protein catabolic process"/>
    <property type="evidence" value="ECO:0007669"/>
    <property type="project" value="UniProtKB-UniRule"/>
</dbReference>
<dbReference type="GO" id="GO:0006508">
    <property type="term" value="P:proteolysis"/>
    <property type="evidence" value="ECO:0007669"/>
    <property type="project" value="UniProtKB-KW"/>
</dbReference>
<dbReference type="CDD" id="cd19501">
    <property type="entry name" value="RecA-like_FtsH"/>
    <property type="match status" value="1"/>
</dbReference>
<dbReference type="FunFam" id="1.10.8.60:FF:000001">
    <property type="entry name" value="ATP-dependent zinc metalloprotease FtsH"/>
    <property type="match status" value="1"/>
</dbReference>
<dbReference type="FunFam" id="1.20.58.760:FF:000001">
    <property type="entry name" value="ATP-dependent zinc metalloprotease FtsH"/>
    <property type="match status" value="1"/>
</dbReference>
<dbReference type="FunFam" id="3.40.50.300:FF:000001">
    <property type="entry name" value="ATP-dependent zinc metalloprotease FtsH"/>
    <property type="match status" value="1"/>
</dbReference>
<dbReference type="Gene3D" id="1.10.8.60">
    <property type="match status" value="1"/>
</dbReference>
<dbReference type="Gene3D" id="3.30.720.210">
    <property type="match status" value="1"/>
</dbReference>
<dbReference type="Gene3D" id="3.40.50.300">
    <property type="entry name" value="P-loop containing nucleotide triphosphate hydrolases"/>
    <property type="match status" value="1"/>
</dbReference>
<dbReference type="Gene3D" id="1.20.58.760">
    <property type="entry name" value="Peptidase M41"/>
    <property type="match status" value="1"/>
</dbReference>
<dbReference type="HAMAP" id="MF_01458">
    <property type="entry name" value="FtsH"/>
    <property type="match status" value="1"/>
</dbReference>
<dbReference type="InterPro" id="IPR003593">
    <property type="entry name" value="AAA+_ATPase"/>
</dbReference>
<dbReference type="InterPro" id="IPR041569">
    <property type="entry name" value="AAA_lid_3"/>
</dbReference>
<dbReference type="InterPro" id="IPR003959">
    <property type="entry name" value="ATPase_AAA_core"/>
</dbReference>
<dbReference type="InterPro" id="IPR003960">
    <property type="entry name" value="ATPase_AAA_CS"/>
</dbReference>
<dbReference type="InterPro" id="IPR005936">
    <property type="entry name" value="FtsH"/>
</dbReference>
<dbReference type="InterPro" id="IPR027417">
    <property type="entry name" value="P-loop_NTPase"/>
</dbReference>
<dbReference type="InterPro" id="IPR011546">
    <property type="entry name" value="Pept_M41_FtsH_extracell"/>
</dbReference>
<dbReference type="InterPro" id="IPR000642">
    <property type="entry name" value="Peptidase_M41"/>
</dbReference>
<dbReference type="InterPro" id="IPR037219">
    <property type="entry name" value="Peptidase_M41-like"/>
</dbReference>
<dbReference type="NCBIfam" id="TIGR01241">
    <property type="entry name" value="FtsH_fam"/>
    <property type="match status" value="1"/>
</dbReference>
<dbReference type="PANTHER" id="PTHR23076:SF97">
    <property type="entry name" value="ATP-DEPENDENT ZINC METALLOPROTEASE YME1L1"/>
    <property type="match status" value="1"/>
</dbReference>
<dbReference type="PANTHER" id="PTHR23076">
    <property type="entry name" value="METALLOPROTEASE M41 FTSH"/>
    <property type="match status" value="1"/>
</dbReference>
<dbReference type="Pfam" id="PF00004">
    <property type="entry name" value="AAA"/>
    <property type="match status" value="1"/>
</dbReference>
<dbReference type="Pfam" id="PF17862">
    <property type="entry name" value="AAA_lid_3"/>
    <property type="match status" value="1"/>
</dbReference>
<dbReference type="Pfam" id="PF06480">
    <property type="entry name" value="FtsH_ext"/>
    <property type="match status" value="1"/>
</dbReference>
<dbReference type="Pfam" id="PF01434">
    <property type="entry name" value="Peptidase_M41"/>
    <property type="match status" value="1"/>
</dbReference>
<dbReference type="SMART" id="SM00382">
    <property type="entry name" value="AAA"/>
    <property type="match status" value="1"/>
</dbReference>
<dbReference type="SUPFAM" id="SSF140990">
    <property type="entry name" value="FtsH protease domain-like"/>
    <property type="match status" value="1"/>
</dbReference>
<dbReference type="SUPFAM" id="SSF52540">
    <property type="entry name" value="P-loop containing nucleoside triphosphate hydrolases"/>
    <property type="match status" value="1"/>
</dbReference>
<dbReference type="PROSITE" id="PS00674">
    <property type="entry name" value="AAA"/>
    <property type="match status" value="1"/>
</dbReference>
<organism>
    <name type="scientific">Rickettsia conorii (strain ATCC VR-613 / Malish 7)</name>
    <dbReference type="NCBI Taxonomy" id="272944"/>
    <lineage>
        <taxon>Bacteria</taxon>
        <taxon>Pseudomonadati</taxon>
        <taxon>Pseudomonadota</taxon>
        <taxon>Alphaproteobacteria</taxon>
        <taxon>Rickettsiales</taxon>
        <taxon>Rickettsiaceae</taxon>
        <taxon>Rickettsieae</taxon>
        <taxon>Rickettsia</taxon>
        <taxon>spotted fever group</taxon>
    </lineage>
</organism>